<organism>
    <name type="scientific">Drosophila yakuba</name>
    <name type="common">Fruit fly</name>
    <dbReference type="NCBI Taxonomy" id="7245"/>
    <lineage>
        <taxon>Eukaryota</taxon>
        <taxon>Metazoa</taxon>
        <taxon>Ecdysozoa</taxon>
        <taxon>Arthropoda</taxon>
        <taxon>Hexapoda</taxon>
        <taxon>Insecta</taxon>
        <taxon>Pterygota</taxon>
        <taxon>Neoptera</taxon>
        <taxon>Endopterygota</taxon>
        <taxon>Diptera</taxon>
        <taxon>Brachycera</taxon>
        <taxon>Muscomorpha</taxon>
        <taxon>Ephydroidea</taxon>
        <taxon>Drosophilidae</taxon>
        <taxon>Drosophila</taxon>
        <taxon>Sophophora</taxon>
    </lineage>
</organism>
<name>TOTE_DROYA</name>
<gene>
    <name evidence="1" type="primary">TotE</name>
    <name evidence="1" type="synonym">Victoria</name>
    <name type="ORF">GE12623</name>
</gene>
<reference evidence="3" key="1">
    <citation type="journal article" date="2007" name="Nature">
        <title>Evolution of genes and genomes on the Drosophila phylogeny.</title>
        <authorList>
            <consortium name="Drosophila 12 genomes consortium"/>
        </authorList>
    </citation>
    <scope>NUCLEOTIDE SEQUENCE [LARGE SCALE GENOMIC DNA]</scope>
    <source>
        <strain evidence="3">Tai18E2 / Tucson 14021-0261.01</strain>
    </source>
</reference>
<sequence>MSYNRTLHSTTSILKMNSALQISCLLLVLGCLLGSGHGQSDAEFAAKSREISQIFGNPSVDKYTKVRNLPALVAFYEKYSSRLRLTAQEKKGIDNAIRQYRAQQNQKVDGVSAQGGTLFDILKKVVEVIIKVVV</sequence>
<comment type="function">
    <text evidence="1">A humoral factor that may play a role in stress tolerance.</text>
</comment>
<comment type="subcellular location">
    <subcellularLocation>
        <location evidence="1">Secreted</location>
    </subcellularLocation>
</comment>
<comment type="similarity">
    <text evidence="2">Belongs to the Turandot family.</text>
</comment>
<protein>
    <recommendedName>
        <fullName evidence="1">Protein Turandot E</fullName>
    </recommendedName>
    <alternativeName>
        <fullName evidence="1">Protein Victoria</fullName>
    </alternativeName>
</protein>
<feature type="signal peptide" evidence="2">
    <location>
        <begin position="1"/>
        <end position="38"/>
    </location>
</feature>
<feature type="chain" id="PRO_0000354991" description="Protein Turandot E">
    <location>
        <begin position="39"/>
        <end position="134"/>
    </location>
</feature>
<proteinExistence type="inferred from homology"/>
<keyword id="KW-0391">Immunity</keyword>
<keyword id="KW-0399">Innate immunity</keyword>
<keyword id="KW-0964">Secreted</keyword>
<keyword id="KW-0732">Signal</keyword>
<dbReference type="EMBL" id="CM000158">
    <property type="protein sequence ID" value="EDW90470.1"/>
    <property type="molecule type" value="Genomic_DNA"/>
</dbReference>
<dbReference type="SMR" id="B4PB41"/>
<dbReference type="EnsemblMetazoa" id="FBtr0259141">
    <property type="protein sequence ID" value="FBpp0257633"/>
    <property type="gene ID" value="FBgn0230351"/>
</dbReference>
<dbReference type="EnsemblMetazoa" id="XM_002090722.4">
    <property type="protein sequence ID" value="XP_002090758.1"/>
    <property type="gene ID" value="LOC6529774"/>
</dbReference>
<dbReference type="GeneID" id="6529774"/>
<dbReference type="KEGG" id="dya:Dyak_GE12623"/>
<dbReference type="HOGENOM" id="CLU_158853_0_0_1"/>
<dbReference type="OMA" id="GHCQSEA"/>
<dbReference type="OrthoDB" id="7857971at2759"/>
<dbReference type="PhylomeDB" id="B4PB41"/>
<dbReference type="Proteomes" id="UP000002282">
    <property type="component" value="Chromosome 2R"/>
</dbReference>
<dbReference type="GO" id="GO:0005615">
    <property type="term" value="C:extracellular space"/>
    <property type="evidence" value="ECO:0000250"/>
    <property type="project" value="UniProtKB"/>
</dbReference>
<dbReference type="GO" id="GO:0034605">
    <property type="term" value="P:cellular response to heat"/>
    <property type="evidence" value="ECO:0007669"/>
    <property type="project" value="UniProtKB-ARBA"/>
</dbReference>
<dbReference type="GO" id="GO:0045087">
    <property type="term" value="P:innate immune response"/>
    <property type="evidence" value="ECO:0007669"/>
    <property type="project" value="UniProtKB-KW"/>
</dbReference>
<dbReference type="GO" id="GO:0009617">
    <property type="term" value="P:response to bacterium"/>
    <property type="evidence" value="ECO:0007669"/>
    <property type="project" value="UniProtKB-ARBA"/>
</dbReference>
<dbReference type="GO" id="GO:0009408">
    <property type="term" value="P:response to heat"/>
    <property type="evidence" value="ECO:0000250"/>
    <property type="project" value="UniProtKB"/>
</dbReference>
<dbReference type="InterPro" id="IPR010825">
    <property type="entry name" value="Turandot"/>
</dbReference>
<dbReference type="Pfam" id="PF07240">
    <property type="entry name" value="Turandot"/>
    <property type="match status" value="1"/>
</dbReference>
<accession>B4PB41</accession>
<evidence type="ECO:0000250" key="1">
    <source>
        <dbReference type="UniProtKB" id="Q8INV7"/>
    </source>
</evidence>
<evidence type="ECO:0000255" key="2"/>
<evidence type="ECO:0000312" key="3">
    <source>
        <dbReference type="EMBL" id="EDW90470.1"/>
    </source>
</evidence>